<accession>Q9LVB0</accession>
<reference key="1">
    <citation type="journal article" date="2000" name="DNA Res.">
        <title>Structural analysis of Arabidopsis thaliana chromosome 5. X. Sequence features of the regions of 3,076,755 bp covered by sixty P1 and TAC clones.</title>
        <authorList>
            <person name="Sato S."/>
            <person name="Nakamura Y."/>
            <person name="Kaneko T."/>
            <person name="Katoh T."/>
            <person name="Asamizu E."/>
            <person name="Kotani H."/>
            <person name="Tabata S."/>
        </authorList>
    </citation>
    <scope>NUCLEOTIDE SEQUENCE [LARGE SCALE GENOMIC DNA]</scope>
    <source>
        <strain>cv. Columbia</strain>
    </source>
</reference>
<reference key="2">
    <citation type="journal article" date="2017" name="Plant J.">
        <title>Araport11: a complete reannotation of the Arabidopsis thaliana reference genome.</title>
        <authorList>
            <person name="Cheng C.Y."/>
            <person name="Krishnakumar V."/>
            <person name="Chan A.P."/>
            <person name="Thibaud-Nissen F."/>
            <person name="Schobel S."/>
            <person name="Town C.D."/>
        </authorList>
    </citation>
    <scope>GENOME REANNOTATION</scope>
    <source>
        <strain>cv. Columbia</strain>
    </source>
</reference>
<reference key="3">
    <citation type="journal article" date="2002" name="Science">
        <title>Functional annotation of a full-length Arabidopsis cDNA collection.</title>
        <authorList>
            <person name="Seki M."/>
            <person name="Narusaka M."/>
            <person name="Kamiya A."/>
            <person name="Ishida J."/>
            <person name="Satou M."/>
            <person name="Sakurai T."/>
            <person name="Nakajima M."/>
            <person name="Enju A."/>
            <person name="Akiyama K."/>
            <person name="Oono Y."/>
            <person name="Muramatsu M."/>
            <person name="Hayashizaki Y."/>
            <person name="Kawai J."/>
            <person name="Carninci P."/>
            <person name="Itoh M."/>
            <person name="Ishii Y."/>
            <person name="Arakawa T."/>
            <person name="Shibata K."/>
            <person name="Shinagawa A."/>
            <person name="Shinozaki K."/>
        </authorList>
    </citation>
    <scope>NUCLEOTIDE SEQUENCE [LARGE SCALE MRNA]</scope>
    <source>
        <strain>cv. Columbia</strain>
    </source>
</reference>
<reference key="4">
    <citation type="journal article" date="2003" name="Science">
        <title>Empirical analysis of transcriptional activity in the Arabidopsis genome.</title>
        <authorList>
            <person name="Yamada K."/>
            <person name="Lim J."/>
            <person name="Dale J.M."/>
            <person name="Chen H."/>
            <person name="Shinn P."/>
            <person name="Palm C.J."/>
            <person name="Southwick A.M."/>
            <person name="Wu H.C."/>
            <person name="Kim C.J."/>
            <person name="Nguyen M."/>
            <person name="Pham P.K."/>
            <person name="Cheuk R.F."/>
            <person name="Karlin-Newmann G."/>
            <person name="Liu S.X."/>
            <person name="Lam B."/>
            <person name="Sakano H."/>
            <person name="Wu T."/>
            <person name="Yu G."/>
            <person name="Miranda M."/>
            <person name="Quach H.L."/>
            <person name="Tripp M."/>
            <person name="Chang C.H."/>
            <person name="Lee J.M."/>
            <person name="Toriumi M.J."/>
            <person name="Chan M.M."/>
            <person name="Tang C.C."/>
            <person name="Onodera C.S."/>
            <person name="Deng J.M."/>
            <person name="Akiyama K."/>
            <person name="Ansari Y."/>
            <person name="Arakawa T."/>
            <person name="Banh J."/>
            <person name="Banno F."/>
            <person name="Bowser L."/>
            <person name="Brooks S.Y."/>
            <person name="Carninci P."/>
            <person name="Chao Q."/>
            <person name="Choy N."/>
            <person name="Enju A."/>
            <person name="Goldsmith A.D."/>
            <person name="Gurjal M."/>
            <person name="Hansen N.F."/>
            <person name="Hayashizaki Y."/>
            <person name="Johnson-Hopson C."/>
            <person name="Hsuan V.W."/>
            <person name="Iida K."/>
            <person name="Karnes M."/>
            <person name="Khan S."/>
            <person name="Koesema E."/>
            <person name="Ishida J."/>
            <person name="Jiang P.X."/>
            <person name="Jones T."/>
            <person name="Kawai J."/>
            <person name="Kamiya A."/>
            <person name="Meyers C."/>
            <person name="Nakajima M."/>
            <person name="Narusaka M."/>
            <person name="Seki M."/>
            <person name="Sakurai T."/>
            <person name="Satou M."/>
            <person name="Tamse R."/>
            <person name="Vaysberg M."/>
            <person name="Wallender E.K."/>
            <person name="Wong C."/>
            <person name="Yamamura Y."/>
            <person name="Yuan S."/>
            <person name="Shinozaki K."/>
            <person name="Davis R.W."/>
            <person name="Theologis A."/>
            <person name="Ecker J.R."/>
        </authorList>
    </citation>
    <scope>NUCLEOTIDE SEQUENCE [LARGE SCALE MRNA]</scope>
    <source>
        <strain>cv. Columbia</strain>
    </source>
</reference>
<reference key="5">
    <citation type="journal article" date="2004" name="Plant Mol. Biol.">
        <title>Identification of a novel plant MAR DNA binding protein localized on chromosomal surfaces.</title>
        <authorList>
            <person name="Fujimoto S."/>
            <person name="Matsunaga S."/>
            <person name="Yonemura M."/>
            <person name="Uchiyama S."/>
            <person name="Azuma T."/>
            <person name="Fukui K."/>
        </authorList>
    </citation>
    <scope>IDENTIFICATION</scope>
    <scope>GENE FAMILY</scope>
    <scope>NOMENCLATURE</scope>
    <source>
        <strain>cv. Columbia</strain>
    </source>
</reference>
<reference key="6">
    <citation type="journal article" date="2013" name="Proc. Natl. Acad. Sci. U.S.A.">
        <title>Arabidopsis thaliana AHL family modulates hypocotyl growth redundantly by interacting with each other via the PPC/DUF296 domain.</title>
        <authorList>
            <person name="Zhao J."/>
            <person name="Favero D.S."/>
            <person name="Peng H."/>
            <person name="Neff M.M."/>
        </authorList>
    </citation>
    <scope>GENE FAMILY</scope>
    <scope>DOMAIN PPC</scope>
</reference>
<comment type="function">
    <text evidence="1">Transcription factor that specifically binds AT-rich DNA sequences related to the nuclear matrix attachment regions (MARs).</text>
</comment>
<comment type="subcellular location">
    <subcellularLocation>
        <location evidence="1">Nucleus</location>
    </subcellularLocation>
</comment>
<comment type="domain">
    <text evidence="5">The PPC domain mediates interactions between AHL proteins.</text>
</comment>
<gene>
    <name evidence="6" type="primary">AHL6</name>
    <name evidence="8" type="ordered locus">At5g62260</name>
    <name evidence="9" type="ORF">MMI9.9</name>
</gene>
<evidence type="ECO:0000250" key="1">
    <source>
        <dbReference type="UniProtKB" id="Q8VYJ2"/>
    </source>
</evidence>
<evidence type="ECO:0000255" key="2"/>
<evidence type="ECO:0000255" key="3">
    <source>
        <dbReference type="PROSITE-ProRule" id="PRU01078"/>
    </source>
</evidence>
<evidence type="ECO:0000256" key="4">
    <source>
        <dbReference type="SAM" id="MobiDB-lite"/>
    </source>
</evidence>
<evidence type="ECO:0000269" key="5">
    <source>
    </source>
</evidence>
<evidence type="ECO:0000303" key="6">
    <source>
    </source>
</evidence>
<evidence type="ECO:0000305" key="7"/>
<evidence type="ECO:0000312" key="8">
    <source>
        <dbReference type="Araport" id="AT5G62260"/>
    </source>
</evidence>
<evidence type="ECO:0000312" key="9">
    <source>
        <dbReference type="EMBL" id="BAA97190.1"/>
    </source>
</evidence>
<evidence type="ECO:0000312" key="10">
    <source>
        <dbReference type="EMBL" id="FAA00277.1"/>
    </source>
</evidence>
<feature type="chain" id="PRO_0000432024" description="AT-hook motif nuclear-localized protein 6">
    <location>
        <begin position="1"/>
        <end position="404"/>
    </location>
</feature>
<feature type="domain" description="PPC" evidence="3">
    <location>
        <begin position="157"/>
        <end position="299"/>
    </location>
</feature>
<feature type="DNA-binding region" description="A.T hook" evidence="2">
    <location>
        <begin position="76"/>
        <end position="88"/>
    </location>
</feature>
<feature type="region of interest" description="Disordered" evidence="4">
    <location>
        <begin position="40"/>
        <end position="112"/>
    </location>
</feature>
<feature type="region of interest" description="Disordered" evidence="4">
    <location>
        <begin position="365"/>
        <end position="404"/>
    </location>
</feature>
<feature type="short sequence motif" description="Bipartite nuclear localization signal" evidence="7">
    <location>
        <begin position="76"/>
        <end position="84"/>
    </location>
</feature>
<feature type="compositionally biased region" description="Pro residues" evidence="4">
    <location>
        <begin position="45"/>
        <end position="55"/>
    </location>
</feature>
<feature type="compositionally biased region" description="Low complexity" evidence="4">
    <location>
        <begin position="56"/>
        <end position="70"/>
    </location>
</feature>
<feature type="compositionally biased region" description="Low complexity" evidence="4">
    <location>
        <begin position="98"/>
        <end position="112"/>
    </location>
</feature>
<feature type="compositionally biased region" description="Acidic residues" evidence="4">
    <location>
        <begin position="382"/>
        <end position="394"/>
    </location>
</feature>
<protein>
    <recommendedName>
        <fullName evidence="10">AT-hook motif nuclear-localized protein 6</fullName>
    </recommendedName>
</protein>
<dbReference type="EMBL" id="AB019235">
    <property type="protein sequence ID" value="BAA97190.1"/>
    <property type="molecule type" value="Genomic_DNA"/>
</dbReference>
<dbReference type="EMBL" id="CP002688">
    <property type="protein sequence ID" value="AED97587.1"/>
    <property type="molecule type" value="Genomic_DNA"/>
</dbReference>
<dbReference type="EMBL" id="CP002688">
    <property type="protein sequence ID" value="ANM70608.1"/>
    <property type="molecule type" value="Genomic_DNA"/>
</dbReference>
<dbReference type="EMBL" id="AK118328">
    <property type="protein sequence ID" value="BAC42942.1"/>
    <property type="molecule type" value="mRNA"/>
</dbReference>
<dbReference type="EMBL" id="BT005681">
    <property type="protein sequence ID" value="AAO64101.1"/>
    <property type="molecule type" value="mRNA"/>
</dbReference>
<dbReference type="EMBL" id="BR000342">
    <property type="protein sequence ID" value="FAA00277.1"/>
    <property type="molecule type" value="mRNA"/>
</dbReference>
<dbReference type="RefSeq" id="NP_001332202.1">
    <property type="nucleotide sequence ID" value="NM_001345545.1"/>
</dbReference>
<dbReference type="RefSeq" id="NP_201032.2">
    <property type="nucleotide sequence ID" value="NM_125620.3"/>
</dbReference>
<dbReference type="SMR" id="Q9LVB0"/>
<dbReference type="FunCoup" id="Q9LVB0">
    <property type="interactions" value="8"/>
</dbReference>
<dbReference type="IntAct" id="Q9LVB0">
    <property type="interactions" value="6"/>
</dbReference>
<dbReference type="STRING" id="3702.Q9LVB0"/>
<dbReference type="GlyGen" id="Q9LVB0">
    <property type="glycosylation" value="2 sites"/>
</dbReference>
<dbReference type="iPTMnet" id="Q9LVB0"/>
<dbReference type="PaxDb" id="3702-AT5G62260.1"/>
<dbReference type="ProteomicsDB" id="244781"/>
<dbReference type="EnsemblPlants" id="AT5G62260.1">
    <property type="protein sequence ID" value="AT5G62260.1"/>
    <property type="gene ID" value="AT5G62260"/>
</dbReference>
<dbReference type="EnsemblPlants" id="AT5G62260.3">
    <property type="protein sequence ID" value="AT5G62260.3"/>
    <property type="gene ID" value="AT5G62260"/>
</dbReference>
<dbReference type="GeneID" id="836347"/>
<dbReference type="Gramene" id="AT5G62260.1">
    <property type="protein sequence ID" value="AT5G62260.1"/>
    <property type="gene ID" value="AT5G62260"/>
</dbReference>
<dbReference type="Gramene" id="AT5G62260.3">
    <property type="protein sequence ID" value="AT5G62260.3"/>
    <property type="gene ID" value="AT5G62260"/>
</dbReference>
<dbReference type="KEGG" id="ath:AT5G62260"/>
<dbReference type="Araport" id="AT5G62260"/>
<dbReference type="TAIR" id="AT5G62260">
    <property type="gene designation" value="AHL6"/>
</dbReference>
<dbReference type="eggNOG" id="ENOG502QTAR">
    <property type="taxonomic scope" value="Eukaryota"/>
</dbReference>
<dbReference type="HOGENOM" id="CLU_039808_0_0_1"/>
<dbReference type="InParanoid" id="Q9LVB0"/>
<dbReference type="PhylomeDB" id="Q9LVB0"/>
<dbReference type="PRO" id="PR:Q9LVB0"/>
<dbReference type="Proteomes" id="UP000006548">
    <property type="component" value="Chromosome 5"/>
</dbReference>
<dbReference type="ExpressionAtlas" id="Q9LVB0">
    <property type="expression patterns" value="baseline and differential"/>
</dbReference>
<dbReference type="GO" id="GO:0005634">
    <property type="term" value="C:nucleus"/>
    <property type="evidence" value="ECO:0007669"/>
    <property type="project" value="UniProtKB-SubCell"/>
</dbReference>
<dbReference type="GO" id="GO:0003680">
    <property type="term" value="F:minor groove of adenine-thymine-rich DNA binding"/>
    <property type="evidence" value="ECO:0007669"/>
    <property type="project" value="InterPro"/>
</dbReference>
<dbReference type="CDD" id="cd11378">
    <property type="entry name" value="DUF296"/>
    <property type="match status" value="1"/>
</dbReference>
<dbReference type="Gene3D" id="3.30.1330.80">
    <property type="entry name" value="Hypothetical protein, similar to alpha- acetolactate decarboxylase, domain 2"/>
    <property type="match status" value="1"/>
</dbReference>
<dbReference type="InterPro" id="IPR039605">
    <property type="entry name" value="AHL"/>
</dbReference>
<dbReference type="InterPro" id="IPR005175">
    <property type="entry name" value="PPC_dom"/>
</dbReference>
<dbReference type="PANTHER" id="PTHR31500:SF82">
    <property type="entry name" value="AT-HOOK MOTIF NUCLEAR-LOCALIZED PROTEIN 6"/>
    <property type="match status" value="1"/>
</dbReference>
<dbReference type="PANTHER" id="PTHR31500">
    <property type="entry name" value="AT-HOOK MOTIF NUCLEAR-LOCALIZED PROTEIN 9"/>
    <property type="match status" value="1"/>
</dbReference>
<dbReference type="Pfam" id="PF03479">
    <property type="entry name" value="PCC"/>
    <property type="match status" value="1"/>
</dbReference>
<dbReference type="SUPFAM" id="SSF117856">
    <property type="entry name" value="AF0104/ALDC/Ptd012-like"/>
    <property type="match status" value="1"/>
</dbReference>
<dbReference type="PROSITE" id="PS51742">
    <property type="entry name" value="PPC"/>
    <property type="match status" value="1"/>
</dbReference>
<organism>
    <name type="scientific">Arabidopsis thaliana</name>
    <name type="common">Mouse-ear cress</name>
    <dbReference type="NCBI Taxonomy" id="3702"/>
    <lineage>
        <taxon>Eukaryota</taxon>
        <taxon>Viridiplantae</taxon>
        <taxon>Streptophyta</taxon>
        <taxon>Embryophyta</taxon>
        <taxon>Tracheophyta</taxon>
        <taxon>Spermatophyta</taxon>
        <taxon>Magnoliopsida</taxon>
        <taxon>eudicotyledons</taxon>
        <taxon>Gunneridae</taxon>
        <taxon>Pentapetalae</taxon>
        <taxon>rosids</taxon>
        <taxon>malvids</taxon>
        <taxon>Brassicales</taxon>
        <taxon>Brassicaceae</taxon>
        <taxon>Camelineae</taxon>
        <taxon>Arabidopsis</taxon>
    </lineage>
</organism>
<proteinExistence type="evidence at transcript level"/>
<sequence>MEEKGEISPSGVVTVKGDEALVPRTEFQQNPSFLQFVSPTTVVTPLPPPPAPSSAPVPTTVTPGSATASTGSDPTKKKRGRPRKYAPDGSLNPRFLRPTLSPTPISSSIPLSGDYQWKRGKAQQQHQPLEFVKKSHKFEYGSPAPTPPLPGLSCYVGANFTTHQFTVNGGEDVTMKVMPYSQQGSRAICILSATGSISNVTLGQPTNAGGTLTYEGRFEILSLSGSFMPTENGGTKGRAGGMSISLAGPNGNIFGGGLAGMLIAAGPVQVVMGSFIVMHQAEQNQKKKPRVMEAFAPPQPQAPPQLQQQQPPTFTITTVNSTSPSVNTVEEQKPQAYGGGIVRPMAQMPSSFQNDNSTMNNFTPAYHGYGNMNTGTTHKEEHEDEDGGDDDDDSGDTRSQSHSG</sequence>
<keyword id="KW-0238">DNA-binding</keyword>
<keyword id="KW-0539">Nucleus</keyword>
<keyword id="KW-1185">Reference proteome</keyword>
<keyword id="KW-0804">Transcription</keyword>
<keyword id="KW-0805">Transcription regulation</keyword>
<name>AHL6_ARATH</name>